<name>TRPD_GEOSE</name>
<proteinExistence type="inferred from homology"/>
<keyword id="KW-0028">Amino-acid biosynthesis</keyword>
<keyword id="KW-0057">Aromatic amino acid biosynthesis</keyword>
<keyword id="KW-0328">Glycosyltransferase</keyword>
<keyword id="KW-0460">Magnesium</keyword>
<keyword id="KW-0479">Metal-binding</keyword>
<keyword id="KW-0808">Transferase</keyword>
<keyword id="KW-0822">Tryptophan biosynthesis</keyword>
<reference key="1">
    <citation type="journal article" date="1999" name="J. Mol. Biol.">
        <title>Regulatory features of the trp operon and the crystal structure of the trp RNA-binding attenuation protein from Bacillus stearothermophilus.</title>
        <authorList>
            <person name="Chen X.-P."/>
            <person name="Antson A.A."/>
            <person name="Yang M."/>
            <person name="Baumann C."/>
            <person name="Dodson E.J."/>
            <person name="Dodson G.G."/>
            <person name="Gollnick P."/>
        </authorList>
    </citation>
    <scope>NUCLEOTIDE SEQUENCE [GENOMIC DNA]</scope>
    <source>
        <strain>ATCC 12980 / NCA 26</strain>
    </source>
</reference>
<organism>
    <name type="scientific">Geobacillus stearothermophilus</name>
    <name type="common">Bacillus stearothermophilus</name>
    <dbReference type="NCBI Taxonomy" id="1422"/>
    <lineage>
        <taxon>Bacteria</taxon>
        <taxon>Bacillati</taxon>
        <taxon>Bacillota</taxon>
        <taxon>Bacilli</taxon>
        <taxon>Bacillales</taxon>
        <taxon>Anoxybacillaceae</taxon>
        <taxon>Geobacillus</taxon>
    </lineage>
</organism>
<accession>Q9X6J5</accession>
<evidence type="ECO:0000255" key="1">
    <source>
        <dbReference type="HAMAP-Rule" id="MF_00211"/>
    </source>
</evidence>
<protein>
    <recommendedName>
        <fullName evidence="1">Anthranilate phosphoribosyltransferase</fullName>
        <ecNumber evidence="1">2.4.2.18</ecNumber>
    </recommendedName>
</protein>
<feature type="chain" id="PRO_0000154429" description="Anthranilate phosphoribosyltransferase">
    <location>
        <begin position="1"/>
        <end position="339"/>
    </location>
</feature>
<feature type="binding site" evidence="1">
    <location>
        <position position="79"/>
    </location>
    <ligand>
        <name>5-phospho-alpha-D-ribose 1-diphosphate</name>
        <dbReference type="ChEBI" id="CHEBI:58017"/>
    </ligand>
</feature>
<feature type="binding site" evidence="1">
    <location>
        <position position="79"/>
    </location>
    <ligand>
        <name>anthranilate</name>
        <dbReference type="ChEBI" id="CHEBI:16567"/>
        <label>1</label>
    </ligand>
</feature>
<feature type="binding site" evidence="1">
    <location>
        <begin position="82"/>
        <end position="83"/>
    </location>
    <ligand>
        <name>5-phospho-alpha-D-ribose 1-diphosphate</name>
        <dbReference type="ChEBI" id="CHEBI:58017"/>
    </ligand>
</feature>
<feature type="binding site" evidence="1">
    <location>
        <position position="87"/>
    </location>
    <ligand>
        <name>5-phospho-alpha-D-ribose 1-diphosphate</name>
        <dbReference type="ChEBI" id="CHEBI:58017"/>
    </ligand>
</feature>
<feature type="binding site" evidence="1">
    <location>
        <begin position="89"/>
        <end position="92"/>
    </location>
    <ligand>
        <name>5-phospho-alpha-D-ribose 1-diphosphate</name>
        <dbReference type="ChEBI" id="CHEBI:58017"/>
    </ligand>
</feature>
<feature type="binding site" evidence="1">
    <location>
        <position position="91"/>
    </location>
    <ligand>
        <name>Mg(2+)</name>
        <dbReference type="ChEBI" id="CHEBI:18420"/>
        <label>1</label>
    </ligand>
</feature>
<feature type="binding site" evidence="1">
    <location>
        <begin position="107"/>
        <end position="115"/>
    </location>
    <ligand>
        <name>5-phospho-alpha-D-ribose 1-diphosphate</name>
        <dbReference type="ChEBI" id="CHEBI:58017"/>
    </ligand>
</feature>
<feature type="binding site" evidence="1">
    <location>
        <position position="110"/>
    </location>
    <ligand>
        <name>anthranilate</name>
        <dbReference type="ChEBI" id="CHEBI:16567"/>
        <label>1</label>
    </ligand>
</feature>
<feature type="binding site" evidence="1">
    <location>
        <position position="119"/>
    </location>
    <ligand>
        <name>5-phospho-alpha-D-ribose 1-diphosphate</name>
        <dbReference type="ChEBI" id="CHEBI:58017"/>
    </ligand>
</feature>
<feature type="binding site" evidence="1">
    <location>
        <position position="165"/>
    </location>
    <ligand>
        <name>anthranilate</name>
        <dbReference type="ChEBI" id="CHEBI:16567"/>
        <label>2</label>
    </ligand>
</feature>
<feature type="binding site" evidence="1">
    <location>
        <position position="224"/>
    </location>
    <ligand>
        <name>Mg(2+)</name>
        <dbReference type="ChEBI" id="CHEBI:18420"/>
        <label>2</label>
    </ligand>
</feature>
<feature type="binding site" evidence="1">
    <location>
        <position position="225"/>
    </location>
    <ligand>
        <name>Mg(2+)</name>
        <dbReference type="ChEBI" id="CHEBI:18420"/>
        <label>1</label>
    </ligand>
</feature>
<feature type="binding site" evidence="1">
    <location>
        <position position="225"/>
    </location>
    <ligand>
        <name>Mg(2+)</name>
        <dbReference type="ChEBI" id="CHEBI:18420"/>
        <label>2</label>
    </ligand>
</feature>
<sequence>MLKRLLSKCAEGETLTEAEAYEAMNAVMSGEATDSQIASLVSILRVRGETVDEIAGFVRAMRDRMTTIDAGDDVIDTCGTGGDGAATFNVSTAAAIVVSSLGVKVAKHGNRAVSSKSGSADVLERLGIDIPASPEAAKQALETKGLAFLFAPLYHAAMKYAAGPRKEIGFRTIFNLIGPLANPARCKRQVIGVYSTRYAEKLAETMRRLGSEHVVFVTGRDGLDECSIAAETDVVELKDGDIRRFVLTPESVGLRXGGLADVQVRSSEESAALLEAVMDGTAPASAIDITALNAGVALYAAGKAETIAAGVAMAKDAILVKTAYEQLQRLRRKEVVHGA</sequence>
<comment type="function">
    <text evidence="1">Catalyzes the transfer of the phosphoribosyl group of 5-phosphorylribose-1-pyrophosphate (PRPP) to anthranilate to yield N-(5'-phosphoribosyl)-anthranilate (PRA).</text>
</comment>
<comment type="catalytic activity">
    <reaction evidence="1">
        <text>N-(5-phospho-beta-D-ribosyl)anthranilate + diphosphate = 5-phospho-alpha-D-ribose 1-diphosphate + anthranilate</text>
        <dbReference type="Rhea" id="RHEA:11768"/>
        <dbReference type="ChEBI" id="CHEBI:16567"/>
        <dbReference type="ChEBI" id="CHEBI:18277"/>
        <dbReference type="ChEBI" id="CHEBI:33019"/>
        <dbReference type="ChEBI" id="CHEBI:58017"/>
        <dbReference type="EC" id="2.4.2.18"/>
    </reaction>
</comment>
<comment type="cofactor">
    <cofactor evidence="1">
        <name>Mg(2+)</name>
        <dbReference type="ChEBI" id="CHEBI:18420"/>
    </cofactor>
    <text evidence="1">Binds 2 magnesium ions per monomer.</text>
</comment>
<comment type="pathway">
    <text evidence="1">Amino-acid biosynthesis; L-tryptophan biosynthesis; L-tryptophan from chorismate: step 2/5.</text>
</comment>
<comment type="subunit">
    <text evidence="1">Homodimer.</text>
</comment>
<comment type="similarity">
    <text evidence="1">Belongs to the anthranilate phosphoribosyltransferase family.</text>
</comment>
<dbReference type="EC" id="2.4.2.18" evidence="1"/>
<dbReference type="EMBL" id="AF139534">
    <property type="protein sequence ID" value="AAD33792.1"/>
    <property type="molecule type" value="Genomic_DNA"/>
</dbReference>
<dbReference type="UniPathway" id="UPA00035">
    <property type="reaction ID" value="UER00041"/>
</dbReference>
<dbReference type="GO" id="GO:0005829">
    <property type="term" value="C:cytosol"/>
    <property type="evidence" value="ECO:0007669"/>
    <property type="project" value="TreeGrafter"/>
</dbReference>
<dbReference type="GO" id="GO:0004048">
    <property type="term" value="F:anthranilate phosphoribosyltransferase activity"/>
    <property type="evidence" value="ECO:0007669"/>
    <property type="project" value="UniProtKB-UniRule"/>
</dbReference>
<dbReference type="GO" id="GO:0000287">
    <property type="term" value="F:magnesium ion binding"/>
    <property type="evidence" value="ECO:0007669"/>
    <property type="project" value="UniProtKB-UniRule"/>
</dbReference>
<dbReference type="GO" id="GO:0000162">
    <property type="term" value="P:L-tryptophan biosynthetic process"/>
    <property type="evidence" value="ECO:0007669"/>
    <property type="project" value="UniProtKB-UniRule"/>
</dbReference>
<dbReference type="FunFam" id="3.40.1030.10:FF:000002">
    <property type="entry name" value="Anthranilate phosphoribosyltransferase"/>
    <property type="match status" value="1"/>
</dbReference>
<dbReference type="Gene3D" id="3.40.1030.10">
    <property type="entry name" value="Nucleoside phosphorylase/phosphoribosyltransferase catalytic domain"/>
    <property type="match status" value="1"/>
</dbReference>
<dbReference type="Gene3D" id="1.20.970.10">
    <property type="entry name" value="Transferase, Pyrimidine Nucleoside Phosphorylase, Chain C"/>
    <property type="match status" value="1"/>
</dbReference>
<dbReference type="HAMAP" id="MF_00211">
    <property type="entry name" value="TrpD"/>
    <property type="match status" value="1"/>
</dbReference>
<dbReference type="InterPro" id="IPR005940">
    <property type="entry name" value="Anthranilate_Pribosyl_Tfrase"/>
</dbReference>
<dbReference type="InterPro" id="IPR000312">
    <property type="entry name" value="Glycosyl_Trfase_fam3"/>
</dbReference>
<dbReference type="InterPro" id="IPR017459">
    <property type="entry name" value="Glycosyl_Trfase_fam3_N_dom"/>
</dbReference>
<dbReference type="InterPro" id="IPR036320">
    <property type="entry name" value="Glycosyl_Trfase_fam3_N_dom_sf"/>
</dbReference>
<dbReference type="InterPro" id="IPR035902">
    <property type="entry name" value="Nuc_phospho_transferase"/>
</dbReference>
<dbReference type="NCBIfam" id="TIGR01245">
    <property type="entry name" value="trpD"/>
    <property type="match status" value="1"/>
</dbReference>
<dbReference type="PANTHER" id="PTHR43285">
    <property type="entry name" value="ANTHRANILATE PHOSPHORIBOSYLTRANSFERASE"/>
    <property type="match status" value="1"/>
</dbReference>
<dbReference type="PANTHER" id="PTHR43285:SF2">
    <property type="entry name" value="ANTHRANILATE PHOSPHORIBOSYLTRANSFERASE"/>
    <property type="match status" value="1"/>
</dbReference>
<dbReference type="Pfam" id="PF02885">
    <property type="entry name" value="Glycos_trans_3N"/>
    <property type="match status" value="1"/>
</dbReference>
<dbReference type="Pfam" id="PF00591">
    <property type="entry name" value="Glycos_transf_3"/>
    <property type="match status" value="1"/>
</dbReference>
<dbReference type="SUPFAM" id="SSF52418">
    <property type="entry name" value="Nucleoside phosphorylase/phosphoribosyltransferase catalytic domain"/>
    <property type="match status" value="1"/>
</dbReference>
<dbReference type="SUPFAM" id="SSF47648">
    <property type="entry name" value="Nucleoside phosphorylase/phosphoribosyltransferase N-terminal domain"/>
    <property type="match status" value="1"/>
</dbReference>
<gene>
    <name evidence="1" type="primary">trpD</name>
</gene>